<feature type="chain" id="PRO_0000054502" description="Alcohol dehydrogenase-related 31 kDa protein">
    <location>
        <begin position="1"/>
        <end position="281"/>
    </location>
</feature>
<feature type="active site" description="Proton acceptor" evidence="2">
    <location>
        <position position="152"/>
    </location>
</feature>
<feature type="binding site" evidence="1">
    <location>
        <begin position="11"/>
        <end position="34"/>
    </location>
    <ligand>
        <name>NAD(+)</name>
        <dbReference type="ChEBI" id="CHEBI:57540"/>
    </ligand>
</feature>
<feature type="binding site" evidence="1">
    <location>
        <position position="139"/>
    </location>
    <ligand>
        <name>substrate</name>
    </ligand>
</feature>
<gene>
    <name type="primary">Adhr</name>
</gene>
<name>ADHR_DROAM</name>
<organism>
    <name type="scientific">Drosophila ambigua</name>
    <name type="common">Fruit fly</name>
    <dbReference type="NCBI Taxonomy" id="7216"/>
    <lineage>
        <taxon>Eukaryota</taxon>
        <taxon>Metazoa</taxon>
        <taxon>Ecdysozoa</taxon>
        <taxon>Arthropoda</taxon>
        <taxon>Hexapoda</taxon>
        <taxon>Insecta</taxon>
        <taxon>Pterygota</taxon>
        <taxon>Neoptera</taxon>
        <taxon>Endopterygota</taxon>
        <taxon>Diptera</taxon>
        <taxon>Brachycera</taxon>
        <taxon>Muscomorpha</taxon>
        <taxon>Ephydroidea</taxon>
        <taxon>Drosophilidae</taxon>
        <taxon>Drosophila</taxon>
        <taxon>Sophophora</taxon>
    </lineage>
</organism>
<accession>P25143</accession>
<evidence type="ECO:0000250" key="1"/>
<evidence type="ECO:0000255" key="2">
    <source>
        <dbReference type="PROSITE-ProRule" id="PRU10001"/>
    </source>
</evidence>
<evidence type="ECO:0000305" key="3"/>
<proteinExistence type="inferred from homology"/>
<protein>
    <recommendedName>
        <fullName>Alcohol dehydrogenase-related 31 kDa protein</fullName>
    </recommendedName>
</protein>
<comment type="similarity">
    <text evidence="3">Belongs to the short-chain dehydrogenases/reductases (SDR) family.</text>
</comment>
<dbReference type="EMBL" id="X54813">
    <property type="protein sequence ID" value="CAA38582.1"/>
    <property type="molecule type" value="Genomic_DNA"/>
</dbReference>
<dbReference type="PIR" id="S16454">
    <property type="entry name" value="S16454"/>
</dbReference>
<dbReference type="SMR" id="P25143"/>
<dbReference type="GO" id="GO:0005737">
    <property type="term" value="C:cytoplasm"/>
    <property type="evidence" value="ECO:0007669"/>
    <property type="project" value="TreeGrafter"/>
</dbReference>
<dbReference type="GO" id="GO:0016491">
    <property type="term" value="F:oxidoreductase activity"/>
    <property type="evidence" value="ECO:0007669"/>
    <property type="project" value="UniProtKB-KW"/>
</dbReference>
<dbReference type="CDD" id="cd05323">
    <property type="entry name" value="ADH_SDR_c_like"/>
    <property type="match status" value="1"/>
</dbReference>
<dbReference type="Gene3D" id="3.40.50.720">
    <property type="entry name" value="NAD(P)-binding Rossmann-like Domain"/>
    <property type="match status" value="1"/>
</dbReference>
<dbReference type="InterPro" id="IPR002427">
    <property type="entry name" value="ADH-rel"/>
</dbReference>
<dbReference type="InterPro" id="IPR036291">
    <property type="entry name" value="NAD(P)-bd_dom_sf"/>
</dbReference>
<dbReference type="InterPro" id="IPR020904">
    <property type="entry name" value="Sc_DH/Rdtase_CS"/>
</dbReference>
<dbReference type="InterPro" id="IPR002347">
    <property type="entry name" value="SDR_fam"/>
</dbReference>
<dbReference type="PANTHER" id="PTHR44229">
    <property type="entry name" value="15-HYDROXYPROSTAGLANDIN DEHYDROGENASE [NAD(+)]"/>
    <property type="match status" value="1"/>
</dbReference>
<dbReference type="PANTHER" id="PTHR44229:SF8">
    <property type="entry name" value="ALCOHOL DEHYDROGENASE-RELATED"/>
    <property type="match status" value="1"/>
</dbReference>
<dbReference type="Pfam" id="PF00106">
    <property type="entry name" value="adh_short"/>
    <property type="match status" value="1"/>
</dbReference>
<dbReference type="PRINTS" id="PR01170">
    <property type="entry name" value="ADHRELATED"/>
</dbReference>
<dbReference type="PRINTS" id="PR01167">
    <property type="entry name" value="INSADHFAMILY"/>
</dbReference>
<dbReference type="PRINTS" id="PR00080">
    <property type="entry name" value="SDRFAMILY"/>
</dbReference>
<dbReference type="SUPFAM" id="SSF51735">
    <property type="entry name" value="NAD(P)-binding Rossmann-fold domains"/>
    <property type="match status" value="1"/>
</dbReference>
<dbReference type="PROSITE" id="PS00061">
    <property type="entry name" value="ADH_SHORT"/>
    <property type="match status" value="1"/>
</dbReference>
<reference key="1">
    <citation type="journal article" date="1991" name="J. Mol. Evol.">
        <title>The Adh genomic region of Drosophila ambigua: evolutionary trends in different species.</title>
        <authorList>
            <person name="Marfany G."/>
            <person name="Gonzalez-Duarte R."/>
        </authorList>
    </citation>
    <scope>NUCLEOTIDE SEQUENCE [GENOMIC DNA]</scope>
</reference>
<keyword id="KW-0560">Oxidoreductase</keyword>
<sequence length="281" mass="31227">MYDLAGKHVCYVADCGGIALETSKVLMTKNIAKLAILQSVENQPAIAQLQSIKHSTQIFFWTFDVTMAREEMKKYFDEVMVQMDYIDVLINGATLCDERNIDATINTNLTGMMNTVATVLPYMDRKMGGSGGLIVNVTSVIGLDPSPVFCAYSASKFGVIGFTRSLADPLYYNQNGVAVMAVCCGPTKVFVDRELNAFLEYGQTFADRLRLAPCQSTAVCGQNIVNAIERSQNGQIWIADKGGLELVTLHWYWHMADQFISYMQSTDDEDQECFLSAAYRK</sequence>